<dbReference type="EC" id="4.1.1.39" evidence="1"/>
<dbReference type="EMBL" id="X55877">
    <property type="protein sequence ID" value="CAA39361.1"/>
    <property type="molecule type" value="Genomic_DNA"/>
</dbReference>
<dbReference type="PIR" id="S17431">
    <property type="entry name" value="RKBML"/>
</dbReference>
<dbReference type="SMR" id="P26958"/>
<dbReference type="GO" id="GO:0009507">
    <property type="term" value="C:chloroplast"/>
    <property type="evidence" value="ECO:0007669"/>
    <property type="project" value="UniProtKB-SubCell"/>
</dbReference>
<dbReference type="GO" id="GO:0000287">
    <property type="term" value="F:magnesium ion binding"/>
    <property type="evidence" value="ECO:0007669"/>
    <property type="project" value="UniProtKB-UniRule"/>
</dbReference>
<dbReference type="GO" id="GO:0004497">
    <property type="term" value="F:monooxygenase activity"/>
    <property type="evidence" value="ECO:0007669"/>
    <property type="project" value="UniProtKB-KW"/>
</dbReference>
<dbReference type="GO" id="GO:0016984">
    <property type="term" value="F:ribulose-bisphosphate carboxylase activity"/>
    <property type="evidence" value="ECO:0007669"/>
    <property type="project" value="UniProtKB-UniRule"/>
</dbReference>
<dbReference type="GO" id="GO:0009853">
    <property type="term" value="P:photorespiration"/>
    <property type="evidence" value="ECO:0007669"/>
    <property type="project" value="UniProtKB-KW"/>
</dbReference>
<dbReference type="GO" id="GO:0019253">
    <property type="term" value="P:reductive pentose-phosphate cycle"/>
    <property type="evidence" value="ECO:0007669"/>
    <property type="project" value="UniProtKB-UniRule"/>
</dbReference>
<dbReference type="CDD" id="cd08212">
    <property type="entry name" value="RuBisCO_large_I"/>
    <property type="match status" value="1"/>
</dbReference>
<dbReference type="FunFam" id="3.30.70.150:FF:000001">
    <property type="entry name" value="Ribulose bisphosphate carboxylase large chain"/>
    <property type="match status" value="1"/>
</dbReference>
<dbReference type="Gene3D" id="3.20.20.110">
    <property type="entry name" value="Ribulose bisphosphate carboxylase, large subunit, C-terminal domain"/>
    <property type="match status" value="1"/>
</dbReference>
<dbReference type="Gene3D" id="3.30.70.150">
    <property type="entry name" value="RuBisCO large subunit, N-terminal domain"/>
    <property type="match status" value="1"/>
</dbReference>
<dbReference type="HAMAP" id="MF_01338">
    <property type="entry name" value="RuBisCO_L_type1"/>
    <property type="match status" value="1"/>
</dbReference>
<dbReference type="InterPro" id="IPR033966">
    <property type="entry name" value="RuBisCO"/>
</dbReference>
<dbReference type="InterPro" id="IPR020878">
    <property type="entry name" value="RuBisCo_large_chain_AS"/>
</dbReference>
<dbReference type="InterPro" id="IPR000685">
    <property type="entry name" value="RuBisCO_lsu_C"/>
</dbReference>
<dbReference type="InterPro" id="IPR036376">
    <property type="entry name" value="RuBisCO_lsu_C_sf"/>
</dbReference>
<dbReference type="InterPro" id="IPR017443">
    <property type="entry name" value="RuBisCO_lsu_fd_N"/>
</dbReference>
<dbReference type="InterPro" id="IPR036422">
    <property type="entry name" value="RuBisCO_lsu_N_sf"/>
</dbReference>
<dbReference type="InterPro" id="IPR020888">
    <property type="entry name" value="RuBisCO_lsuI"/>
</dbReference>
<dbReference type="NCBIfam" id="NF003252">
    <property type="entry name" value="PRK04208.1"/>
    <property type="match status" value="1"/>
</dbReference>
<dbReference type="PANTHER" id="PTHR42704">
    <property type="entry name" value="RIBULOSE BISPHOSPHATE CARBOXYLASE"/>
    <property type="match status" value="1"/>
</dbReference>
<dbReference type="PANTHER" id="PTHR42704:SF17">
    <property type="entry name" value="RIBULOSE BISPHOSPHATE CARBOXYLASE LARGE CHAIN"/>
    <property type="match status" value="1"/>
</dbReference>
<dbReference type="Pfam" id="PF00016">
    <property type="entry name" value="RuBisCO_large"/>
    <property type="match status" value="1"/>
</dbReference>
<dbReference type="Pfam" id="PF02788">
    <property type="entry name" value="RuBisCO_large_N"/>
    <property type="match status" value="1"/>
</dbReference>
<dbReference type="SFLD" id="SFLDG01052">
    <property type="entry name" value="RuBisCO"/>
    <property type="match status" value="1"/>
</dbReference>
<dbReference type="SFLD" id="SFLDS00014">
    <property type="entry name" value="RuBisCO"/>
    <property type="match status" value="1"/>
</dbReference>
<dbReference type="SFLD" id="SFLDG00301">
    <property type="entry name" value="RuBisCO-like_proteins"/>
    <property type="match status" value="1"/>
</dbReference>
<dbReference type="SUPFAM" id="SSF51649">
    <property type="entry name" value="RuBisCo, C-terminal domain"/>
    <property type="match status" value="1"/>
</dbReference>
<dbReference type="SUPFAM" id="SSF54966">
    <property type="entry name" value="RuBisCO, large subunit, small (N-terminal) domain"/>
    <property type="match status" value="1"/>
</dbReference>
<dbReference type="PROSITE" id="PS00157">
    <property type="entry name" value="RUBISCO_LARGE"/>
    <property type="match status" value="1"/>
</dbReference>
<evidence type="ECO:0000255" key="1">
    <source>
        <dbReference type="HAMAP-Rule" id="MF_01338"/>
    </source>
</evidence>
<accession>P26958</accession>
<name>RBL_BRYMA</name>
<sequence length="475" mass="52631">MAPKTETKAGAGFKAGVKDYRLTYYTPDYQVKDTDILAAFRMTPQPGVPPEECGAAVAAESSTGTWTTVWTDGLTSLDRYKGRCYDLEPVKGEENQYIAYVAYPLDLFEEGSVTNLFTSIVGNVFGFKALRALRLEDLRISVAYAKTFQGPPHGIEVERDKLNKYGRPLLGCTIKPKLGLSAKNYGRAVYECLRGGLDFTKDDENVNSQPFMRWRDRFLFVAEAIYKSQAETGEIKGHYLNATAATCEAMLQRAQCAKELGVPIIMHDYLTGGWTANTSLAHYCRDHGLLLHIHRAMHAVIDRQKNHGMHFRVLAKSLRMSGGDHLHSGTVVGKLEGEREVTLGFVDLMRDDFIEKDRARGIYFTQDWVLLPGVMPVASGGIHVWHMPALVEIFGDDACLQFGGGTLGHPWGNAPGAAANRIACEACVQARNEGRHLAREGGDVIRAACKWSPELAAACEVWKEIKFEFETIDTL</sequence>
<keyword id="KW-0007">Acetylation</keyword>
<keyword id="KW-0113">Calvin cycle</keyword>
<keyword id="KW-0120">Carbon dioxide fixation</keyword>
<keyword id="KW-0150">Chloroplast</keyword>
<keyword id="KW-1015">Disulfide bond</keyword>
<keyword id="KW-0456">Lyase</keyword>
<keyword id="KW-0460">Magnesium</keyword>
<keyword id="KW-0479">Metal-binding</keyword>
<keyword id="KW-0488">Methylation</keyword>
<keyword id="KW-0503">Monooxygenase</keyword>
<keyword id="KW-0560">Oxidoreductase</keyword>
<keyword id="KW-0601">Photorespiration</keyword>
<keyword id="KW-0602">Photosynthesis</keyword>
<keyword id="KW-0934">Plastid</keyword>
<proteinExistence type="inferred from homology"/>
<feature type="propeptide" id="PRO_0000031147" evidence="1">
    <location>
        <begin position="1"/>
        <end position="2"/>
    </location>
</feature>
<feature type="chain" id="PRO_0000031148" description="Ribulose bisphosphate carboxylase large chain">
    <location>
        <begin position="3"/>
        <end position="475"/>
    </location>
</feature>
<feature type="active site" description="Proton acceptor" evidence="1">
    <location>
        <position position="175"/>
    </location>
</feature>
<feature type="active site" description="Proton acceptor" evidence="1">
    <location>
        <position position="294"/>
    </location>
</feature>
<feature type="binding site" description="in homodimeric partner" evidence="1">
    <location>
        <position position="123"/>
    </location>
    <ligand>
        <name>substrate</name>
    </ligand>
</feature>
<feature type="binding site" evidence="1">
    <location>
        <position position="173"/>
    </location>
    <ligand>
        <name>substrate</name>
    </ligand>
</feature>
<feature type="binding site" evidence="1">
    <location>
        <position position="177"/>
    </location>
    <ligand>
        <name>substrate</name>
    </ligand>
</feature>
<feature type="binding site" description="via carbamate group" evidence="1">
    <location>
        <position position="201"/>
    </location>
    <ligand>
        <name>Mg(2+)</name>
        <dbReference type="ChEBI" id="CHEBI:18420"/>
    </ligand>
</feature>
<feature type="binding site" evidence="1">
    <location>
        <position position="203"/>
    </location>
    <ligand>
        <name>Mg(2+)</name>
        <dbReference type="ChEBI" id="CHEBI:18420"/>
    </ligand>
</feature>
<feature type="binding site" evidence="1">
    <location>
        <position position="204"/>
    </location>
    <ligand>
        <name>Mg(2+)</name>
        <dbReference type="ChEBI" id="CHEBI:18420"/>
    </ligand>
</feature>
<feature type="binding site" evidence="1">
    <location>
        <position position="295"/>
    </location>
    <ligand>
        <name>substrate</name>
    </ligand>
</feature>
<feature type="binding site" evidence="1">
    <location>
        <position position="327"/>
    </location>
    <ligand>
        <name>substrate</name>
    </ligand>
</feature>
<feature type="binding site" evidence="1">
    <location>
        <position position="379"/>
    </location>
    <ligand>
        <name>substrate</name>
    </ligand>
</feature>
<feature type="site" description="Transition state stabilizer" evidence="1">
    <location>
        <position position="334"/>
    </location>
</feature>
<feature type="modified residue" description="N-acetylproline" evidence="1">
    <location>
        <position position="3"/>
    </location>
</feature>
<feature type="modified residue" description="N6,N6,N6-trimethyllysine" evidence="1">
    <location>
        <position position="14"/>
    </location>
</feature>
<feature type="modified residue" description="N6-carboxylysine" evidence="1">
    <location>
        <position position="201"/>
    </location>
</feature>
<feature type="disulfide bond" description="Interchain; in linked form" evidence="1">
    <location>
        <position position="247"/>
    </location>
</feature>
<gene>
    <name evidence="1" type="primary">rbcL</name>
</gene>
<protein>
    <recommendedName>
        <fullName evidence="1">Ribulose bisphosphate carboxylase large chain</fullName>
        <shortName evidence="1">RuBisCO large subunit</shortName>
        <ecNumber evidence="1">4.1.1.39</ecNumber>
    </recommendedName>
</protein>
<reference key="1">
    <citation type="journal article" date="1991" name="Plant Mol. Biol.">
        <title>Nucleotide sequence of the large subunit of ribulose-1,5-bisphosphate carboxylase/oxygenase from the green alga Bryopsis maxima.</title>
        <authorList>
            <person name="Kono M."/>
            <person name="Satoh H."/>
            <person name="Okabe Y."/>
            <person name="Abe Y."/>
            <person name="Nakayama K."/>
            <person name="Okada M."/>
        </authorList>
    </citation>
    <scope>NUCLEOTIDE SEQUENCE [GENOMIC DNA]</scope>
</reference>
<geneLocation type="chloroplast"/>
<organism>
    <name type="scientific">Bryopsis maxima</name>
    <name type="common">Green alga</name>
    <dbReference type="NCBI Taxonomy" id="3129"/>
    <lineage>
        <taxon>Eukaryota</taxon>
        <taxon>Viridiplantae</taxon>
        <taxon>Chlorophyta</taxon>
        <taxon>Ulvophyceae</taxon>
        <taxon>TCBD clade</taxon>
        <taxon>Bryopsidales</taxon>
        <taxon>Bryopsidineae</taxon>
        <taxon>Bryopsidaceae</taxon>
        <taxon>Bryopsis</taxon>
    </lineage>
</organism>
<comment type="function">
    <text evidence="1">RuBisCO catalyzes two reactions: the carboxylation of D-ribulose 1,5-bisphosphate, the primary event in carbon dioxide fixation, as well as the oxidative fragmentation of the pentose substrate in the photorespiration process. Both reactions occur simultaneously and in competition at the same active site.</text>
</comment>
<comment type="catalytic activity">
    <reaction evidence="1">
        <text>2 (2R)-3-phosphoglycerate + 2 H(+) = D-ribulose 1,5-bisphosphate + CO2 + H2O</text>
        <dbReference type="Rhea" id="RHEA:23124"/>
        <dbReference type="ChEBI" id="CHEBI:15377"/>
        <dbReference type="ChEBI" id="CHEBI:15378"/>
        <dbReference type="ChEBI" id="CHEBI:16526"/>
        <dbReference type="ChEBI" id="CHEBI:57870"/>
        <dbReference type="ChEBI" id="CHEBI:58272"/>
        <dbReference type="EC" id="4.1.1.39"/>
    </reaction>
</comment>
<comment type="catalytic activity">
    <reaction evidence="1">
        <text>D-ribulose 1,5-bisphosphate + O2 = 2-phosphoglycolate + (2R)-3-phosphoglycerate + 2 H(+)</text>
        <dbReference type="Rhea" id="RHEA:36631"/>
        <dbReference type="ChEBI" id="CHEBI:15378"/>
        <dbReference type="ChEBI" id="CHEBI:15379"/>
        <dbReference type="ChEBI" id="CHEBI:57870"/>
        <dbReference type="ChEBI" id="CHEBI:58033"/>
        <dbReference type="ChEBI" id="CHEBI:58272"/>
    </reaction>
</comment>
<comment type="cofactor">
    <cofactor evidence="1">
        <name>Mg(2+)</name>
        <dbReference type="ChEBI" id="CHEBI:18420"/>
    </cofactor>
    <text evidence="1">Binds 1 Mg(2+) ion per subunit.</text>
</comment>
<comment type="subunit">
    <text evidence="1">Heterohexadecamer of 8 large chains and 8 small chains; disulfide-linked. The disulfide link is formed within the large subunit homodimers.</text>
</comment>
<comment type="subcellular location">
    <subcellularLocation>
        <location>Plastid</location>
        <location>Chloroplast</location>
    </subcellularLocation>
</comment>
<comment type="PTM">
    <text evidence="1">The disulfide bond which can form in the large chain dimeric partners within the hexadecamer appears to be associated with oxidative stress and protein turnover.</text>
</comment>
<comment type="miscellaneous">
    <text evidence="1">The basic functional RuBisCO is composed of a large chain homodimer in a 'head-to-tail' conformation. In form I RuBisCO this homodimer is arranged in a barrel-like tetramer with the small subunits forming a tetrameric 'cap' on each end of the 'barrel'.</text>
</comment>
<comment type="similarity">
    <text evidence="1">Belongs to the RuBisCO large chain family. Type I subfamily.</text>
</comment>